<accession>Q8K0C4</accession>
<accession>Q8BSQ7</accession>
<accession>Q9JIP8</accession>
<accession>Q9JIY3</accession>
<comment type="function">
    <text evidence="3 5">Sterol 14alpha-demethylase that plays a critical role in the cholesterol biosynthesis pathway, being cholesterol the major sterol component in mammalian membranes as well as a precursor for bile acid and steroid hormone synthesis (PubMed:21705796). Cytochrome P450 monooxygenase that catalyzes the three-step oxidative removal of the 14alpha-methyl group (C-32) of sterols such as lanosterol (lanosta-8,24-dien-3beta-ol) and 24,25-dihydrolanosterol (DHL) in the form of formate, and converts the sterols to 4,4-dimethyl-5alpha-cholesta-8,14,24-trien-3beta-ol and 4,4-dimethyl-8,14-cholestadien-3beta-ol, respectively, which are intermediates of cholesterol biosynthesis (PubMed:21705796). Can also demethylate substrates not intrinsic to mammals, such as eburicol (24-methylene-24,25-dihydrolanosterol), but at a lower rate than DHL (By similarity).</text>
</comment>
<comment type="catalytic activity">
    <reaction evidence="5">
        <text>a 14alpha-methyl steroid + 3 reduced [NADPH--hemoprotein reductase] + 3 O2 = a Delta(14) steroid + formate + 3 oxidized [NADPH--hemoprotein reductase] + 4 H2O + 4 H(+)</text>
        <dbReference type="Rhea" id="RHEA:54028"/>
        <dbReference type="Rhea" id="RHEA-COMP:11964"/>
        <dbReference type="Rhea" id="RHEA-COMP:11965"/>
        <dbReference type="ChEBI" id="CHEBI:15377"/>
        <dbReference type="ChEBI" id="CHEBI:15378"/>
        <dbReference type="ChEBI" id="CHEBI:15379"/>
        <dbReference type="ChEBI" id="CHEBI:15740"/>
        <dbReference type="ChEBI" id="CHEBI:57618"/>
        <dbReference type="ChEBI" id="CHEBI:58210"/>
        <dbReference type="ChEBI" id="CHEBI:138029"/>
        <dbReference type="ChEBI" id="CHEBI:138031"/>
        <dbReference type="EC" id="1.14.14.154"/>
    </reaction>
    <physiologicalReaction direction="left-to-right" evidence="5">
        <dbReference type="Rhea" id="RHEA:54029"/>
    </physiologicalReaction>
</comment>
<comment type="catalytic activity">
    <reaction evidence="5">
        <text>lanosterol + 3 reduced [NADPH--hemoprotein reductase] + 3 O2 = 4,4-dimethyl-5alpha-cholesta-8,14,24-trien-3beta-ol + formate + 3 oxidized [NADPH--hemoprotein reductase] + 4 H2O + 4 H(+)</text>
        <dbReference type="Rhea" id="RHEA:25286"/>
        <dbReference type="Rhea" id="RHEA-COMP:11964"/>
        <dbReference type="Rhea" id="RHEA-COMP:11965"/>
        <dbReference type="ChEBI" id="CHEBI:15377"/>
        <dbReference type="ChEBI" id="CHEBI:15378"/>
        <dbReference type="ChEBI" id="CHEBI:15379"/>
        <dbReference type="ChEBI" id="CHEBI:15740"/>
        <dbReference type="ChEBI" id="CHEBI:16521"/>
        <dbReference type="ChEBI" id="CHEBI:17813"/>
        <dbReference type="ChEBI" id="CHEBI:57618"/>
        <dbReference type="ChEBI" id="CHEBI:58210"/>
        <dbReference type="EC" id="1.14.14.154"/>
    </reaction>
    <physiologicalReaction direction="left-to-right" evidence="5">
        <dbReference type="Rhea" id="RHEA:25287"/>
    </physiologicalReaction>
</comment>
<comment type="catalytic activity">
    <reaction evidence="5">
        <text>24,25-dihydrolanosterol + 3 reduced [NADPH--hemoprotein reductase] + 3 O2 = 4,4-dimethyl-8,14-cholestadien-3beta-ol + formate + 3 oxidized [NADPH--hemoprotein reductase] + 4 H2O + 4 H(+)</text>
        <dbReference type="Rhea" id="RHEA:45960"/>
        <dbReference type="Rhea" id="RHEA-COMP:11964"/>
        <dbReference type="Rhea" id="RHEA-COMP:11965"/>
        <dbReference type="ChEBI" id="CHEBI:15377"/>
        <dbReference type="ChEBI" id="CHEBI:15378"/>
        <dbReference type="ChEBI" id="CHEBI:15379"/>
        <dbReference type="ChEBI" id="CHEBI:15740"/>
        <dbReference type="ChEBI" id="CHEBI:28113"/>
        <dbReference type="ChEBI" id="CHEBI:57618"/>
        <dbReference type="ChEBI" id="CHEBI:58210"/>
        <dbReference type="ChEBI" id="CHEBI:78904"/>
    </reaction>
    <physiologicalReaction direction="left-to-right" evidence="5">
        <dbReference type="Rhea" id="RHEA:45961"/>
    </physiologicalReaction>
</comment>
<comment type="catalytic activity">
    <reaction evidence="3">
        <text>a 14alpha-methyl steroid + reduced [NADPH--hemoprotein reductase] + O2 = a 14alpha-hydroxymethyl steroid + oxidized [NADPH--hemoprotein reductase] + H2O + H(+)</text>
        <dbReference type="Rhea" id="RHEA:68060"/>
        <dbReference type="Rhea" id="RHEA-COMP:11964"/>
        <dbReference type="Rhea" id="RHEA-COMP:11965"/>
        <dbReference type="ChEBI" id="CHEBI:15377"/>
        <dbReference type="ChEBI" id="CHEBI:15378"/>
        <dbReference type="ChEBI" id="CHEBI:15379"/>
        <dbReference type="ChEBI" id="CHEBI:57618"/>
        <dbReference type="ChEBI" id="CHEBI:58210"/>
        <dbReference type="ChEBI" id="CHEBI:138029"/>
        <dbReference type="ChEBI" id="CHEBI:176901"/>
    </reaction>
    <physiologicalReaction direction="left-to-right" evidence="3">
        <dbReference type="Rhea" id="RHEA:68061"/>
    </physiologicalReaction>
</comment>
<comment type="catalytic activity">
    <reaction evidence="3">
        <text>a 14alpha-hydroxymethyl steroid + reduced [NADPH--hemoprotein reductase] + O2 = a 14alpha-formyl steroid + oxidized [NADPH--hemoprotein reductase] + 2 H2O + H(+)</text>
        <dbReference type="Rhea" id="RHEA:68064"/>
        <dbReference type="Rhea" id="RHEA-COMP:11964"/>
        <dbReference type="Rhea" id="RHEA-COMP:11965"/>
        <dbReference type="ChEBI" id="CHEBI:15377"/>
        <dbReference type="ChEBI" id="CHEBI:15378"/>
        <dbReference type="ChEBI" id="CHEBI:15379"/>
        <dbReference type="ChEBI" id="CHEBI:57618"/>
        <dbReference type="ChEBI" id="CHEBI:58210"/>
        <dbReference type="ChEBI" id="CHEBI:176901"/>
        <dbReference type="ChEBI" id="CHEBI:176902"/>
    </reaction>
    <physiologicalReaction direction="left-to-right" evidence="3">
        <dbReference type="Rhea" id="RHEA:68065"/>
    </physiologicalReaction>
</comment>
<comment type="catalytic activity">
    <reaction evidence="3">
        <text>a 14alpha-formyl steroid + reduced [NADPH--hemoprotein reductase] + O2 = a Delta(14) steroid + formate + oxidized [NADPH--hemoprotein reductase] + H2O + 2 H(+)</text>
        <dbReference type="Rhea" id="RHEA:68068"/>
        <dbReference type="Rhea" id="RHEA-COMP:11964"/>
        <dbReference type="Rhea" id="RHEA-COMP:11965"/>
        <dbReference type="ChEBI" id="CHEBI:15377"/>
        <dbReference type="ChEBI" id="CHEBI:15378"/>
        <dbReference type="ChEBI" id="CHEBI:15379"/>
        <dbReference type="ChEBI" id="CHEBI:15740"/>
        <dbReference type="ChEBI" id="CHEBI:57618"/>
        <dbReference type="ChEBI" id="CHEBI:58210"/>
        <dbReference type="ChEBI" id="CHEBI:138031"/>
        <dbReference type="ChEBI" id="CHEBI:176902"/>
    </reaction>
    <physiologicalReaction direction="left-to-right" evidence="3">
        <dbReference type="Rhea" id="RHEA:68069"/>
    </physiologicalReaction>
</comment>
<comment type="catalytic activity">
    <reaction evidence="3">
        <text>lanosterol + reduced [NADPH--hemoprotein reductase] + O2 = 32-hydroxylanosterol + oxidized [NADPH--hemoprotein reductase] + H2O + H(+)</text>
        <dbReference type="Rhea" id="RHEA:75103"/>
        <dbReference type="Rhea" id="RHEA-COMP:11964"/>
        <dbReference type="Rhea" id="RHEA-COMP:11965"/>
        <dbReference type="ChEBI" id="CHEBI:15377"/>
        <dbReference type="ChEBI" id="CHEBI:15378"/>
        <dbReference type="ChEBI" id="CHEBI:15379"/>
        <dbReference type="ChEBI" id="CHEBI:16521"/>
        <dbReference type="ChEBI" id="CHEBI:57618"/>
        <dbReference type="ChEBI" id="CHEBI:58210"/>
        <dbReference type="ChEBI" id="CHEBI:166806"/>
    </reaction>
    <physiologicalReaction direction="left-to-right" evidence="3">
        <dbReference type="Rhea" id="RHEA:75104"/>
    </physiologicalReaction>
</comment>
<comment type="catalytic activity">
    <reaction evidence="3">
        <text>32-hydroxylanosterol + reduced [NADPH--hemoprotein reductase] + O2 = 32-oxolanosterol + oxidized [NADPH--hemoprotein reductase] + 2 H2O + H(+)</text>
        <dbReference type="Rhea" id="RHEA:75107"/>
        <dbReference type="Rhea" id="RHEA-COMP:11964"/>
        <dbReference type="Rhea" id="RHEA-COMP:11965"/>
        <dbReference type="ChEBI" id="CHEBI:15377"/>
        <dbReference type="ChEBI" id="CHEBI:15378"/>
        <dbReference type="ChEBI" id="CHEBI:15379"/>
        <dbReference type="ChEBI" id="CHEBI:57618"/>
        <dbReference type="ChEBI" id="CHEBI:58210"/>
        <dbReference type="ChEBI" id="CHEBI:166681"/>
        <dbReference type="ChEBI" id="CHEBI:166806"/>
    </reaction>
    <physiologicalReaction direction="left-to-right" evidence="3">
        <dbReference type="Rhea" id="RHEA:75108"/>
    </physiologicalReaction>
</comment>
<comment type="catalytic activity">
    <reaction evidence="3">
        <text>32-oxolanosterol + reduced [NADPH--hemoprotein reductase] + O2 = 4,4-dimethyl-5alpha-cholesta-8,14,24-trien-3beta-ol + formate + oxidized [NADPH--hemoprotein reductase] + H2O + 2 H(+)</text>
        <dbReference type="Rhea" id="RHEA:75111"/>
        <dbReference type="Rhea" id="RHEA-COMP:11964"/>
        <dbReference type="Rhea" id="RHEA-COMP:11965"/>
        <dbReference type="ChEBI" id="CHEBI:15377"/>
        <dbReference type="ChEBI" id="CHEBI:15378"/>
        <dbReference type="ChEBI" id="CHEBI:15379"/>
        <dbReference type="ChEBI" id="CHEBI:15740"/>
        <dbReference type="ChEBI" id="CHEBI:17813"/>
        <dbReference type="ChEBI" id="CHEBI:57618"/>
        <dbReference type="ChEBI" id="CHEBI:58210"/>
        <dbReference type="ChEBI" id="CHEBI:166681"/>
    </reaction>
    <physiologicalReaction direction="left-to-right" evidence="3">
        <dbReference type="Rhea" id="RHEA:75112"/>
    </physiologicalReaction>
</comment>
<comment type="catalytic activity">
    <reaction evidence="3">
        <text>24,25-dihydrolanosterol + reduced [NADPH--hemoprotein reductase] + O2 = 32-hydroxy-24,25-dihydrolanosterol + oxidized [NADPH--hemoprotein reductase] + H2O + H(+)</text>
        <dbReference type="Rhea" id="RHEA:75079"/>
        <dbReference type="Rhea" id="RHEA-COMP:11964"/>
        <dbReference type="Rhea" id="RHEA-COMP:11965"/>
        <dbReference type="ChEBI" id="CHEBI:15377"/>
        <dbReference type="ChEBI" id="CHEBI:15378"/>
        <dbReference type="ChEBI" id="CHEBI:15379"/>
        <dbReference type="ChEBI" id="CHEBI:28113"/>
        <dbReference type="ChEBI" id="CHEBI:57618"/>
        <dbReference type="ChEBI" id="CHEBI:58210"/>
        <dbReference type="ChEBI" id="CHEBI:87057"/>
    </reaction>
    <physiologicalReaction direction="left-to-right" evidence="3">
        <dbReference type="Rhea" id="RHEA:75080"/>
    </physiologicalReaction>
</comment>
<comment type="catalytic activity">
    <reaction evidence="3">
        <text>32-hydroxy-24,25-dihydrolanosterol + reduced [NADPH--hemoprotein reductase] + O2 = 32-oxo-24,25-dihydrolanosterol + oxidized [NADPH--hemoprotein reductase] + 2 H2O + H(+)</text>
        <dbReference type="Rhea" id="RHEA:75087"/>
        <dbReference type="Rhea" id="RHEA-COMP:11964"/>
        <dbReference type="Rhea" id="RHEA-COMP:11965"/>
        <dbReference type="ChEBI" id="CHEBI:15377"/>
        <dbReference type="ChEBI" id="CHEBI:15378"/>
        <dbReference type="ChEBI" id="CHEBI:15379"/>
        <dbReference type="ChEBI" id="CHEBI:57618"/>
        <dbReference type="ChEBI" id="CHEBI:58210"/>
        <dbReference type="ChEBI" id="CHEBI:87057"/>
        <dbReference type="ChEBI" id="CHEBI:87060"/>
    </reaction>
    <physiologicalReaction direction="left-to-right" evidence="3">
        <dbReference type="Rhea" id="RHEA:75088"/>
    </physiologicalReaction>
</comment>
<comment type="catalytic activity">
    <reaction evidence="3">
        <text>32-oxo-24,25-dihydrolanosterol + reduced [NADPH--hemoprotein reductase] + O2 = 4,4-dimethyl-8,14-cholestadien-3beta-ol + formate + oxidized [NADPH--hemoprotein reductase] + H2O + 2 H(+)</text>
        <dbReference type="Rhea" id="RHEA:75083"/>
        <dbReference type="Rhea" id="RHEA-COMP:11964"/>
        <dbReference type="Rhea" id="RHEA-COMP:11965"/>
        <dbReference type="ChEBI" id="CHEBI:15377"/>
        <dbReference type="ChEBI" id="CHEBI:15378"/>
        <dbReference type="ChEBI" id="CHEBI:15379"/>
        <dbReference type="ChEBI" id="CHEBI:15740"/>
        <dbReference type="ChEBI" id="CHEBI:57618"/>
        <dbReference type="ChEBI" id="CHEBI:58210"/>
        <dbReference type="ChEBI" id="CHEBI:78904"/>
        <dbReference type="ChEBI" id="CHEBI:87060"/>
    </reaction>
    <physiologicalReaction direction="left-to-right" evidence="3">
        <dbReference type="Rhea" id="RHEA:75084"/>
    </physiologicalReaction>
</comment>
<comment type="cofactor">
    <cofactor evidence="2">
        <name>heme</name>
        <dbReference type="ChEBI" id="CHEBI:30413"/>
    </cofactor>
</comment>
<comment type="activity regulation">
    <text evidence="3">Inhibited by azalanstat. Inhibited by azole antifungal agents ketoconazole, itraconazole and fluconazole.</text>
</comment>
<comment type="pathway">
    <text evidence="3">Steroid biosynthesis; zymosterol biosynthesis; zymosterol from lanosterol: step 1/6.</text>
</comment>
<comment type="subcellular location">
    <subcellularLocation>
        <location evidence="3">Endoplasmic reticulum membrane</location>
        <topology evidence="4">Single-pass membrane protein</topology>
    </subcellularLocation>
    <subcellularLocation>
        <location evidence="3">Microsome membrane</location>
        <topology evidence="4">Single-pass membrane protein</topology>
    </subcellularLocation>
</comment>
<comment type="PTM">
    <text evidence="2">Ubiquitinated by MARCHF6, leading to proteasomal degradation.</text>
</comment>
<comment type="disruption phenotype">
    <text evidence="5">Embryonic lethality at 15 dpc, likely due to heart failure. Mutant mice present complete block of de novo cholesterol synthesis at 14.5 dpc. Heart abnormalities include hypoplasia combined with ventricle septum and epicardial and vasculogenesis defects. Skeletal abnormalities include facial hypoplasia, brachycephaly, and bowed and jointed bones of the extremities with camptodactyly. Can serve as an animal model for studying Antley-Bixler syndrome.</text>
</comment>
<comment type="similarity">
    <text evidence="8">Belongs to the cytochrome P450 family.</text>
</comment>
<comment type="sequence caution" evidence="8">
    <conflict type="erroneous initiation">
        <sequence resource="EMBL-CDS" id="AAF73986"/>
    </conflict>
    <text>Truncated N-terminus.</text>
</comment>
<sequence length="503" mass="56776">MVLLGLLQSGGWVLGQAMEQVTGGNLLSTLLIACAFTLSLVYLFRLAVGHMVQLPAGAKSPPHIYSPIPFLGHAIAFGKSPIEFLENAYEKYGPVFSFTMVGKTFTYLLGSDAAALLFNSKNEDLNAEEVYGRLTTPVFGKGVAYDVPNAIFLEQKKIIKSGLNIAHFKQYVPIIEKEAKEYFQSWGESGERNVFEALSELIILTASHCLHGKEIRSQLNEKVAQLYADLDGGFTHAAWLLPAWLPLPSFRRRDRAHREIKNIFYKAIQKRRLSKEPAEDILQTLLDSTYKDGRPLTDEEISGMLIGLLLAGQHTSSTTSAWMGFFLAKDKPLQEKCYLEQKAVCGEDLPPLTYDQLKDLNLLDRCIKETLRLRPPIMTMMRMAKTPQTVAGYTIPPGHQVCVSPTVNQRLKDSWAERLDFNPDRYLQDNPASGEKFAYVPFGAGRHRCVGENFAYVQIKTIWSTMLRLYEFDLINGYFPTVNYTTMIHTPENPVIRYKRRSK</sequence>
<reference key="1">
    <citation type="journal article" date="2000" name="Arch. Biochem. Biophys.">
        <title>Characterization of the mouse lanosterol 14alpha-demethylase (CYP51), a new member of the evolutionarily most conserved cytochrome P450 family.</title>
        <authorList>
            <person name="Debeljak N."/>
            <person name="Horvat S."/>
            <person name="Vouk K."/>
            <person name="Lee M."/>
            <person name="Rozman D."/>
        </authorList>
    </citation>
    <scope>NUCLEOTIDE SEQUENCE [GENOMIC DNA]</scope>
    <source>
        <strain>129/Sv</strain>
    </source>
</reference>
<reference key="2">
    <citation type="journal article" date="2000" name="Pflugers Arch.">
        <title>Molecular cloning and partial characterisation of the mouse Cyp51 cDNA.</title>
        <authorList>
            <person name="Debeljak N."/>
            <person name="Horvat S."/>
            <person name="Komel R."/>
            <person name="Rozman D."/>
        </authorList>
    </citation>
    <scope>NUCLEOTIDE SEQUENCE [MRNA]</scope>
    <scope>TISSUE SPECIFICITY</scope>
    <source>
        <strain>129/Sv</strain>
    </source>
</reference>
<reference key="3">
    <citation type="journal article" date="2005" name="Science">
        <title>The transcriptional landscape of the mammalian genome.</title>
        <authorList>
            <person name="Carninci P."/>
            <person name="Kasukawa T."/>
            <person name="Katayama S."/>
            <person name="Gough J."/>
            <person name="Frith M.C."/>
            <person name="Maeda N."/>
            <person name="Oyama R."/>
            <person name="Ravasi T."/>
            <person name="Lenhard B."/>
            <person name="Wells C."/>
            <person name="Kodzius R."/>
            <person name="Shimokawa K."/>
            <person name="Bajic V.B."/>
            <person name="Brenner S.E."/>
            <person name="Batalov S."/>
            <person name="Forrest A.R."/>
            <person name="Zavolan M."/>
            <person name="Davis M.J."/>
            <person name="Wilming L.G."/>
            <person name="Aidinis V."/>
            <person name="Allen J.E."/>
            <person name="Ambesi-Impiombato A."/>
            <person name="Apweiler R."/>
            <person name="Aturaliya R.N."/>
            <person name="Bailey T.L."/>
            <person name="Bansal M."/>
            <person name="Baxter L."/>
            <person name="Beisel K.W."/>
            <person name="Bersano T."/>
            <person name="Bono H."/>
            <person name="Chalk A.M."/>
            <person name="Chiu K.P."/>
            <person name="Choudhary V."/>
            <person name="Christoffels A."/>
            <person name="Clutterbuck D.R."/>
            <person name="Crowe M.L."/>
            <person name="Dalla E."/>
            <person name="Dalrymple B.P."/>
            <person name="de Bono B."/>
            <person name="Della Gatta G."/>
            <person name="di Bernardo D."/>
            <person name="Down T."/>
            <person name="Engstrom P."/>
            <person name="Fagiolini M."/>
            <person name="Faulkner G."/>
            <person name="Fletcher C.F."/>
            <person name="Fukushima T."/>
            <person name="Furuno M."/>
            <person name="Futaki S."/>
            <person name="Gariboldi M."/>
            <person name="Georgii-Hemming P."/>
            <person name="Gingeras T.R."/>
            <person name="Gojobori T."/>
            <person name="Green R.E."/>
            <person name="Gustincich S."/>
            <person name="Harbers M."/>
            <person name="Hayashi Y."/>
            <person name="Hensch T.K."/>
            <person name="Hirokawa N."/>
            <person name="Hill D."/>
            <person name="Huminiecki L."/>
            <person name="Iacono M."/>
            <person name="Ikeo K."/>
            <person name="Iwama A."/>
            <person name="Ishikawa T."/>
            <person name="Jakt M."/>
            <person name="Kanapin A."/>
            <person name="Katoh M."/>
            <person name="Kawasawa Y."/>
            <person name="Kelso J."/>
            <person name="Kitamura H."/>
            <person name="Kitano H."/>
            <person name="Kollias G."/>
            <person name="Krishnan S.P."/>
            <person name="Kruger A."/>
            <person name="Kummerfeld S.K."/>
            <person name="Kurochkin I.V."/>
            <person name="Lareau L.F."/>
            <person name="Lazarevic D."/>
            <person name="Lipovich L."/>
            <person name="Liu J."/>
            <person name="Liuni S."/>
            <person name="McWilliam S."/>
            <person name="Madan Babu M."/>
            <person name="Madera M."/>
            <person name="Marchionni L."/>
            <person name="Matsuda H."/>
            <person name="Matsuzawa S."/>
            <person name="Miki H."/>
            <person name="Mignone F."/>
            <person name="Miyake S."/>
            <person name="Morris K."/>
            <person name="Mottagui-Tabar S."/>
            <person name="Mulder N."/>
            <person name="Nakano N."/>
            <person name="Nakauchi H."/>
            <person name="Ng P."/>
            <person name="Nilsson R."/>
            <person name="Nishiguchi S."/>
            <person name="Nishikawa S."/>
            <person name="Nori F."/>
            <person name="Ohara O."/>
            <person name="Okazaki Y."/>
            <person name="Orlando V."/>
            <person name="Pang K.C."/>
            <person name="Pavan W.J."/>
            <person name="Pavesi G."/>
            <person name="Pesole G."/>
            <person name="Petrovsky N."/>
            <person name="Piazza S."/>
            <person name="Reed J."/>
            <person name="Reid J.F."/>
            <person name="Ring B.Z."/>
            <person name="Ringwald M."/>
            <person name="Rost B."/>
            <person name="Ruan Y."/>
            <person name="Salzberg S.L."/>
            <person name="Sandelin A."/>
            <person name="Schneider C."/>
            <person name="Schoenbach C."/>
            <person name="Sekiguchi K."/>
            <person name="Semple C.A."/>
            <person name="Seno S."/>
            <person name="Sessa L."/>
            <person name="Sheng Y."/>
            <person name="Shibata Y."/>
            <person name="Shimada H."/>
            <person name="Shimada K."/>
            <person name="Silva D."/>
            <person name="Sinclair B."/>
            <person name="Sperling S."/>
            <person name="Stupka E."/>
            <person name="Sugiura K."/>
            <person name="Sultana R."/>
            <person name="Takenaka Y."/>
            <person name="Taki K."/>
            <person name="Tammoja K."/>
            <person name="Tan S.L."/>
            <person name="Tang S."/>
            <person name="Taylor M.S."/>
            <person name="Tegner J."/>
            <person name="Teichmann S.A."/>
            <person name="Ueda H.R."/>
            <person name="van Nimwegen E."/>
            <person name="Verardo R."/>
            <person name="Wei C.L."/>
            <person name="Yagi K."/>
            <person name="Yamanishi H."/>
            <person name="Zabarovsky E."/>
            <person name="Zhu S."/>
            <person name="Zimmer A."/>
            <person name="Hide W."/>
            <person name="Bult C."/>
            <person name="Grimmond S.M."/>
            <person name="Teasdale R.D."/>
            <person name="Liu E.T."/>
            <person name="Brusic V."/>
            <person name="Quackenbush J."/>
            <person name="Wahlestedt C."/>
            <person name="Mattick J.S."/>
            <person name="Hume D.A."/>
            <person name="Kai C."/>
            <person name="Sasaki D."/>
            <person name="Tomaru Y."/>
            <person name="Fukuda S."/>
            <person name="Kanamori-Katayama M."/>
            <person name="Suzuki M."/>
            <person name="Aoki J."/>
            <person name="Arakawa T."/>
            <person name="Iida J."/>
            <person name="Imamura K."/>
            <person name="Itoh M."/>
            <person name="Kato T."/>
            <person name="Kawaji H."/>
            <person name="Kawagashira N."/>
            <person name="Kawashima T."/>
            <person name="Kojima M."/>
            <person name="Kondo S."/>
            <person name="Konno H."/>
            <person name="Nakano K."/>
            <person name="Ninomiya N."/>
            <person name="Nishio T."/>
            <person name="Okada M."/>
            <person name="Plessy C."/>
            <person name="Shibata K."/>
            <person name="Shiraki T."/>
            <person name="Suzuki S."/>
            <person name="Tagami M."/>
            <person name="Waki K."/>
            <person name="Watahiki A."/>
            <person name="Okamura-Oho Y."/>
            <person name="Suzuki H."/>
            <person name="Kawai J."/>
            <person name="Hayashizaki Y."/>
        </authorList>
    </citation>
    <scope>NUCLEOTIDE SEQUENCE [LARGE SCALE MRNA]</scope>
    <source>
        <strain>C57BL/6J</strain>
        <tissue>Embryo</tissue>
        <tissue>Placenta</tissue>
        <tissue>Skin</tissue>
        <tissue>Testis</tissue>
    </source>
</reference>
<reference key="4">
    <citation type="submission" date="2005-07" db="EMBL/GenBank/DDBJ databases">
        <authorList>
            <person name="Mural R.J."/>
            <person name="Adams M.D."/>
            <person name="Myers E.W."/>
            <person name="Smith H.O."/>
            <person name="Venter J.C."/>
        </authorList>
    </citation>
    <scope>NUCLEOTIDE SEQUENCE [LARGE SCALE GENOMIC DNA]</scope>
</reference>
<reference key="5">
    <citation type="journal article" date="2004" name="Genome Res.">
        <title>The status, quality, and expansion of the NIH full-length cDNA project: the Mammalian Gene Collection (MGC).</title>
        <authorList>
            <consortium name="The MGC Project Team"/>
        </authorList>
    </citation>
    <scope>NUCLEOTIDE SEQUENCE [LARGE SCALE MRNA]</scope>
    <source>
        <strain>FVB/N</strain>
        <tissue>Salivary gland</tissue>
    </source>
</reference>
<reference key="6">
    <citation type="journal article" date="2010" name="Cell">
        <title>A tissue-specific atlas of mouse protein phosphorylation and expression.</title>
        <authorList>
            <person name="Huttlin E.L."/>
            <person name="Jedrychowski M.P."/>
            <person name="Elias J.E."/>
            <person name="Goswami T."/>
            <person name="Rad R."/>
            <person name="Beausoleil S.A."/>
            <person name="Villen J."/>
            <person name="Haas W."/>
            <person name="Sowa M.E."/>
            <person name="Gygi S.P."/>
        </authorList>
    </citation>
    <scope>IDENTIFICATION BY MASS SPECTROMETRY [LARGE SCALE ANALYSIS]</scope>
    <source>
        <tissue>Brain</tissue>
        <tissue>Brown adipose tissue</tissue>
        <tissue>Kidney</tissue>
        <tissue>Liver</tissue>
        <tissue>Pancreas</tissue>
        <tissue>Testis</tissue>
    </source>
</reference>
<reference key="7">
    <citation type="journal article" date="2011" name="J. Biol. Chem.">
        <title>Mouse knockout of the cholesterogenic cytochrome P450 lanosterol 14alpha-demethylase (Cyp51) resembles Antley-Bixler syndrome.</title>
        <authorList>
            <person name="Keber R."/>
            <person name="Motaln H."/>
            <person name="Wagner K.D."/>
            <person name="Debeljak N."/>
            <person name="Rassoulzadegan M."/>
            <person name="Acimovic J."/>
            <person name="Rozman D."/>
            <person name="Horvat S."/>
        </authorList>
    </citation>
    <scope>DISRUPTION PHENOTYPE</scope>
    <scope>FUNCTION</scope>
</reference>
<organism>
    <name type="scientific">Mus musculus</name>
    <name type="common">Mouse</name>
    <dbReference type="NCBI Taxonomy" id="10090"/>
    <lineage>
        <taxon>Eukaryota</taxon>
        <taxon>Metazoa</taxon>
        <taxon>Chordata</taxon>
        <taxon>Craniata</taxon>
        <taxon>Vertebrata</taxon>
        <taxon>Euteleostomi</taxon>
        <taxon>Mammalia</taxon>
        <taxon>Eutheria</taxon>
        <taxon>Euarchontoglires</taxon>
        <taxon>Glires</taxon>
        <taxon>Rodentia</taxon>
        <taxon>Myomorpha</taxon>
        <taxon>Muroidea</taxon>
        <taxon>Muridae</taxon>
        <taxon>Murinae</taxon>
        <taxon>Mus</taxon>
        <taxon>Mus</taxon>
    </lineage>
</organism>
<proteinExistence type="evidence at protein level"/>
<name>CP51A_MOUSE</name>
<feature type="chain" id="PRO_0000376796" description="Lanosterol 14-alpha demethylase">
    <location>
        <begin position="1"/>
        <end position="503"/>
    </location>
</feature>
<feature type="transmembrane region" description="Helical" evidence="4">
    <location>
        <begin position="24"/>
        <end position="44"/>
    </location>
</feature>
<feature type="binding site" description="axial binding residue" evidence="1">
    <location>
        <position position="449"/>
    </location>
    <ligand>
        <name>heme</name>
        <dbReference type="ChEBI" id="CHEBI:30413"/>
    </ligand>
    <ligandPart>
        <name>Fe</name>
        <dbReference type="ChEBI" id="CHEBI:18248"/>
    </ligandPart>
</feature>
<feature type="sequence conflict" description="In Ref. 1; AAF74562." evidence="8" ref="1">
    <original>E</original>
    <variation>A</variation>
    <location>
        <position position="19"/>
    </location>
</feature>
<feature type="sequence conflict" description="In Ref. 1; AAF74562 and 2; AAF73986." evidence="8" ref="1 2">
    <original>F</original>
    <variation>L</variation>
    <location>
        <position position="98"/>
    </location>
</feature>
<feature type="sequence conflict" description="In Ref. 3; BAC27231." evidence="8" ref="3">
    <original>T</original>
    <variation>A</variation>
    <location>
        <position position="235"/>
    </location>
</feature>
<protein>
    <recommendedName>
        <fullName evidence="6 7">Lanosterol 14-alpha demethylase</fullName>
        <shortName>LDM</shortName>
        <ecNumber evidence="5">1.14.14.154</ecNumber>
    </recommendedName>
    <alternativeName>
        <fullName>CYPLI</fullName>
    </alternativeName>
    <alternativeName>
        <fullName>Cytochrome P450 51A1</fullName>
        <shortName evidence="6 7">CYP51</shortName>
    </alternativeName>
    <alternativeName>
        <fullName>Cytochrome P450-14DM</fullName>
        <shortName>Cytochrome P45014DM</shortName>
    </alternativeName>
    <alternativeName>
        <fullName>Cytochrome P450LI</fullName>
    </alternativeName>
    <alternativeName>
        <fullName>Sterol 14-alpha demethylase</fullName>
    </alternativeName>
</protein>
<gene>
    <name evidence="9" type="primary">Cyp51a1</name>
    <name type="synonym">Cyp51</name>
</gene>
<dbReference type="EC" id="1.14.14.154" evidence="5"/>
<dbReference type="EMBL" id="AF204804">
    <property type="protein sequence ID" value="AAF74562.1"/>
    <property type="molecule type" value="Genomic_DNA"/>
</dbReference>
<dbReference type="EMBL" id="AF204796">
    <property type="protein sequence ID" value="AAF74562.1"/>
    <property type="status" value="JOINED"/>
    <property type="molecule type" value="Genomic_DNA"/>
</dbReference>
<dbReference type="EMBL" id="AF204797">
    <property type="protein sequence ID" value="AAF74562.1"/>
    <property type="status" value="JOINED"/>
    <property type="molecule type" value="Genomic_DNA"/>
</dbReference>
<dbReference type="EMBL" id="AF204798">
    <property type="protein sequence ID" value="AAF74562.1"/>
    <property type="status" value="JOINED"/>
    <property type="molecule type" value="Genomic_DNA"/>
</dbReference>
<dbReference type="EMBL" id="AF204799">
    <property type="protein sequence ID" value="AAF74562.1"/>
    <property type="status" value="JOINED"/>
    <property type="molecule type" value="Genomic_DNA"/>
</dbReference>
<dbReference type="EMBL" id="AF204800">
    <property type="protein sequence ID" value="AAF74562.1"/>
    <property type="status" value="JOINED"/>
    <property type="molecule type" value="Genomic_DNA"/>
</dbReference>
<dbReference type="EMBL" id="AF204801">
    <property type="protein sequence ID" value="AAF74562.1"/>
    <property type="status" value="JOINED"/>
    <property type="molecule type" value="Genomic_DNA"/>
</dbReference>
<dbReference type="EMBL" id="AF204802">
    <property type="protein sequence ID" value="AAF74562.1"/>
    <property type="status" value="JOINED"/>
    <property type="molecule type" value="Genomic_DNA"/>
</dbReference>
<dbReference type="EMBL" id="AF204803">
    <property type="protein sequence ID" value="AAF74562.1"/>
    <property type="status" value="JOINED"/>
    <property type="molecule type" value="Genomic_DNA"/>
</dbReference>
<dbReference type="EMBL" id="AF166266">
    <property type="protein sequence ID" value="AAF73986.1"/>
    <property type="status" value="ALT_INIT"/>
    <property type="molecule type" value="mRNA"/>
</dbReference>
<dbReference type="EMBL" id="AK028355">
    <property type="protein sequence ID" value="BAC25900.1"/>
    <property type="molecule type" value="mRNA"/>
</dbReference>
<dbReference type="EMBL" id="AK028815">
    <property type="protein sequence ID" value="BAC26134.1"/>
    <property type="molecule type" value="mRNA"/>
</dbReference>
<dbReference type="EMBL" id="AK031059">
    <property type="protein sequence ID" value="BAC27231.1"/>
    <property type="molecule type" value="mRNA"/>
</dbReference>
<dbReference type="EMBL" id="AK076983">
    <property type="protein sequence ID" value="BAC36548.1"/>
    <property type="molecule type" value="mRNA"/>
</dbReference>
<dbReference type="EMBL" id="CH466600">
    <property type="protein sequence ID" value="EDL14627.1"/>
    <property type="molecule type" value="Genomic_DNA"/>
</dbReference>
<dbReference type="EMBL" id="BC031813">
    <property type="protein sequence ID" value="AAH31813.1"/>
    <property type="molecule type" value="mRNA"/>
</dbReference>
<dbReference type="CCDS" id="CCDS19071.1"/>
<dbReference type="RefSeq" id="NP_064394.2">
    <property type="nucleotide sequence ID" value="NM_020010.2"/>
</dbReference>
<dbReference type="SMR" id="Q8K0C4"/>
<dbReference type="BioGRID" id="199037">
    <property type="interactions" value="1"/>
</dbReference>
<dbReference type="FunCoup" id="Q8K0C4">
    <property type="interactions" value="1816"/>
</dbReference>
<dbReference type="STRING" id="10090.ENSMUSP00000001507"/>
<dbReference type="ChEMBL" id="CHEMBL3774294"/>
<dbReference type="iPTMnet" id="Q8K0C4"/>
<dbReference type="PhosphoSitePlus" id="Q8K0C4"/>
<dbReference type="SwissPalm" id="Q8K0C4"/>
<dbReference type="jPOST" id="Q8K0C4"/>
<dbReference type="PaxDb" id="10090-ENSMUSP00000001507"/>
<dbReference type="PeptideAtlas" id="Q8K0C4"/>
<dbReference type="ProteomicsDB" id="283933"/>
<dbReference type="Pumba" id="Q8K0C4"/>
<dbReference type="Antibodypedia" id="34871">
    <property type="antibodies" value="265 antibodies from 31 providers"/>
</dbReference>
<dbReference type="DNASU" id="13121"/>
<dbReference type="Ensembl" id="ENSMUST00000001507.5">
    <property type="protein sequence ID" value="ENSMUSP00000001507.5"/>
    <property type="gene ID" value="ENSMUSG00000001467.6"/>
</dbReference>
<dbReference type="GeneID" id="13121"/>
<dbReference type="KEGG" id="mmu:13121"/>
<dbReference type="UCSC" id="uc008wie.1">
    <property type="organism name" value="mouse"/>
</dbReference>
<dbReference type="AGR" id="MGI:106040"/>
<dbReference type="CTD" id="13121"/>
<dbReference type="MGI" id="MGI:106040">
    <property type="gene designation" value="Cyp51"/>
</dbReference>
<dbReference type="VEuPathDB" id="HostDB:ENSMUSG00000001467"/>
<dbReference type="eggNOG" id="KOG0684">
    <property type="taxonomic scope" value="Eukaryota"/>
</dbReference>
<dbReference type="GeneTree" id="ENSGT00930000151026"/>
<dbReference type="HOGENOM" id="CLU_001570_15_0_1"/>
<dbReference type="InParanoid" id="Q8K0C4"/>
<dbReference type="OMA" id="HWFPFVG"/>
<dbReference type="OrthoDB" id="1055148at2759"/>
<dbReference type="PhylomeDB" id="Q8K0C4"/>
<dbReference type="TreeFam" id="TF105091"/>
<dbReference type="Reactome" id="R-MMU-191273">
    <property type="pathway name" value="Cholesterol biosynthesis"/>
</dbReference>
<dbReference type="Reactome" id="R-MMU-211976">
    <property type="pathway name" value="Endogenous sterols"/>
</dbReference>
<dbReference type="UniPathway" id="UPA00770">
    <property type="reaction ID" value="UER00754"/>
</dbReference>
<dbReference type="BioGRID-ORCS" id="13121">
    <property type="hits" value="4 hits in 78 CRISPR screens"/>
</dbReference>
<dbReference type="PRO" id="PR:Q8K0C4"/>
<dbReference type="Proteomes" id="UP000000589">
    <property type="component" value="Chromosome 5"/>
</dbReference>
<dbReference type="RNAct" id="Q8K0C4">
    <property type="molecule type" value="protein"/>
</dbReference>
<dbReference type="Bgee" id="ENSMUSG00000001467">
    <property type="expression patterns" value="Expressed in embryonic post-anal tail and 281 other cell types or tissues"/>
</dbReference>
<dbReference type="GO" id="GO:0001669">
    <property type="term" value="C:acrosomal vesicle"/>
    <property type="evidence" value="ECO:0007669"/>
    <property type="project" value="Ensembl"/>
</dbReference>
<dbReference type="GO" id="GO:0005789">
    <property type="term" value="C:endoplasmic reticulum membrane"/>
    <property type="evidence" value="ECO:0007669"/>
    <property type="project" value="UniProtKB-SubCell"/>
</dbReference>
<dbReference type="GO" id="GO:0020037">
    <property type="term" value="F:heme binding"/>
    <property type="evidence" value="ECO:0000250"/>
    <property type="project" value="UniProtKB"/>
</dbReference>
<dbReference type="GO" id="GO:0005506">
    <property type="term" value="F:iron ion binding"/>
    <property type="evidence" value="ECO:0007669"/>
    <property type="project" value="InterPro"/>
</dbReference>
<dbReference type="GO" id="GO:0008398">
    <property type="term" value="F:sterol 14-demethylase activity"/>
    <property type="evidence" value="ECO:0000250"/>
    <property type="project" value="UniProtKB"/>
</dbReference>
<dbReference type="GO" id="GO:0006695">
    <property type="term" value="P:cholesterol biosynthetic process"/>
    <property type="evidence" value="ECO:0000304"/>
    <property type="project" value="MGI"/>
</dbReference>
<dbReference type="GO" id="GO:0033488">
    <property type="term" value="P:cholesterol biosynthetic process via 24,25-dihydrolanosterol"/>
    <property type="evidence" value="ECO:0007669"/>
    <property type="project" value="Ensembl"/>
</dbReference>
<dbReference type="GO" id="GO:1900222">
    <property type="term" value="P:negative regulation of amyloid-beta clearance"/>
    <property type="evidence" value="ECO:0000315"/>
    <property type="project" value="ARUK-UCL"/>
</dbReference>
<dbReference type="GO" id="GO:0042177">
    <property type="term" value="P:negative regulation of protein catabolic process"/>
    <property type="evidence" value="ECO:0000315"/>
    <property type="project" value="ARUK-UCL"/>
</dbReference>
<dbReference type="GO" id="GO:0050709">
    <property type="term" value="P:negative regulation of protein secretion"/>
    <property type="evidence" value="ECO:0000315"/>
    <property type="project" value="ARUK-UCL"/>
</dbReference>
<dbReference type="GO" id="GO:0060282">
    <property type="term" value="P:positive regulation of oocyte development"/>
    <property type="evidence" value="ECO:0007669"/>
    <property type="project" value="Ensembl"/>
</dbReference>
<dbReference type="GO" id="GO:0044752">
    <property type="term" value="P:response to human chorionic gonadotropin"/>
    <property type="evidence" value="ECO:0007669"/>
    <property type="project" value="Ensembl"/>
</dbReference>
<dbReference type="GO" id="GO:0032868">
    <property type="term" value="P:response to insulin"/>
    <property type="evidence" value="ECO:0007669"/>
    <property type="project" value="Ensembl"/>
</dbReference>
<dbReference type="GO" id="GO:0010288">
    <property type="term" value="P:response to lead ion"/>
    <property type="evidence" value="ECO:0007669"/>
    <property type="project" value="Ensembl"/>
</dbReference>
<dbReference type="GO" id="GO:0007283">
    <property type="term" value="P:spermatogenesis"/>
    <property type="evidence" value="ECO:0007669"/>
    <property type="project" value="Ensembl"/>
</dbReference>
<dbReference type="GO" id="GO:0006694">
    <property type="term" value="P:steroid biosynthetic process"/>
    <property type="evidence" value="ECO:0000250"/>
    <property type="project" value="UniProtKB"/>
</dbReference>
<dbReference type="CDD" id="cd11042">
    <property type="entry name" value="CYP51-like"/>
    <property type="match status" value="1"/>
</dbReference>
<dbReference type="FunFam" id="1.10.630.10:FF:000027">
    <property type="entry name" value="lanosterol 14-alpha demethylase isoform X1"/>
    <property type="match status" value="1"/>
</dbReference>
<dbReference type="Gene3D" id="1.10.630.10">
    <property type="entry name" value="Cytochrome P450"/>
    <property type="match status" value="1"/>
</dbReference>
<dbReference type="InterPro" id="IPR050529">
    <property type="entry name" value="CYP450_sterol_14alpha_dmase"/>
</dbReference>
<dbReference type="InterPro" id="IPR001128">
    <property type="entry name" value="Cyt_P450"/>
</dbReference>
<dbReference type="InterPro" id="IPR017972">
    <property type="entry name" value="Cyt_P450_CS"/>
</dbReference>
<dbReference type="InterPro" id="IPR002403">
    <property type="entry name" value="Cyt_P450_E_grp-IV"/>
</dbReference>
<dbReference type="InterPro" id="IPR036396">
    <property type="entry name" value="Cyt_P450_sf"/>
</dbReference>
<dbReference type="PANTHER" id="PTHR24304:SF2">
    <property type="entry name" value="24-HYDROXYCHOLESTEROL 7-ALPHA-HYDROXYLASE"/>
    <property type="match status" value="1"/>
</dbReference>
<dbReference type="PANTHER" id="PTHR24304">
    <property type="entry name" value="CYTOCHROME P450 FAMILY 7"/>
    <property type="match status" value="1"/>
</dbReference>
<dbReference type="Pfam" id="PF00067">
    <property type="entry name" value="p450"/>
    <property type="match status" value="1"/>
</dbReference>
<dbReference type="PRINTS" id="PR00465">
    <property type="entry name" value="EP450IV"/>
</dbReference>
<dbReference type="PRINTS" id="PR00385">
    <property type="entry name" value="P450"/>
</dbReference>
<dbReference type="SUPFAM" id="SSF48264">
    <property type="entry name" value="Cytochrome P450"/>
    <property type="match status" value="1"/>
</dbReference>
<dbReference type="PROSITE" id="PS00086">
    <property type="entry name" value="CYTOCHROME_P450"/>
    <property type="match status" value="1"/>
</dbReference>
<evidence type="ECO:0000250" key="1"/>
<evidence type="ECO:0000250" key="2">
    <source>
        <dbReference type="UniProtKB" id="Q16850"/>
    </source>
</evidence>
<evidence type="ECO:0000250" key="3">
    <source>
        <dbReference type="UniProtKB" id="Q64654"/>
    </source>
</evidence>
<evidence type="ECO:0000255" key="4"/>
<evidence type="ECO:0000269" key="5">
    <source>
    </source>
</evidence>
<evidence type="ECO:0000303" key="6">
    <source>
    </source>
</evidence>
<evidence type="ECO:0000303" key="7">
    <source>
    </source>
</evidence>
<evidence type="ECO:0000305" key="8"/>
<evidence type="ECO:0000312" key="9">
    <source>
        <dbReference type="EMBL" id="AAF74562.1"/>
    </source>
</evidence>
<keyword id="KW-0152">Cholesterol biosynthesis</keyword>
<keyword id="KW-0153">Cholesterol metabolism</keyword>
<keyword id="KW-0256">Endoplasmic reticulum</keyword>
<keyword id="KW-0349">Heme</keyword>
<keyword id="KW-0408">Iron</keyword>
<keyword id="KW-0444">Lipid biosynthesis</keyword>
<keyword id="KW-0443">Lipid metabolism</keyword>
<keyword id="KW-0472">Membrane</keyword>
<keyword id="KW-0479">Metal-binding</keyword>
<keyword id="KW-0492">Microsome</keyword>
<keyword id="KW-0503">Monooxygenase</keyword>
<keyword id="KW-0560">Oxidoreductase</keyword>
<keyword id="KW-1185">Reference proteome</keyword>
<keyword id="KW-0752">Steroid biosynthesis</keyword>
<keyword id="KW-0753">Steroid metabolism</keyword>
<keyword id="KW-0756">Sterol biosynthesis</keyword>
<keyword id="KW-1207">Sterol metabolism</keyword>
<keyword id="KW-0812">Transmembrane</keyword>
<keyword id="KW-1133">Transmembrane helix</keyword>
<keyword id="KW-0832">Ubl conjugation</keyword>